<gene>
    <name type="primary">SEC61</name>
    <name type="ordered locus">CAGL0H04961g</name>
</gene>
<name>SC61A_CANGA</name>
<dbReference type="EMBL" id="CR380954">
    <property type="protein sequence ID" value="CAG59944.1"/>
    <property type="molecule type" value="Genomic_DNA"/>
</dbReference>
<dbReference type="RefSeq" id="XP_447011.1">
    <property type="nucleotide sequence ID" value="XM_447011.1"/>
</dbReference>
<dbReference type="SMR" id="Q6FRY3"/>
<dbReference type="FunCoup" id="Q6FRY3">
    <property type="interactions" value="1058"/>
</dbReference>
<dbReference type="STRING" id="284593.Q6FRY3"/>
<dbReference type="EnsemblFungi" id="CAGL0H04961g-T">
    <property type="protein sequence ID" value="CAGL0H04961g-T-p1"/>
    <property type="gene ID" value="CAGL0H04961g"/>
</dbReference>
<dbReference type="KEGG" id="cgr:2888525"/>
<dbReference type="CGD" id="CAL0130012">
    <property type="gene designation" value="CAGL0H04961g"/>
</dbReference>
<dbReference type="VEuPathDB" id="FungiDB:B1J91_H04961g"/>
<dbReference type="VEuPathDB" id="FungiDB:CAGL0H04961g"/>
<dbReference type="eggNOG" id="KOG1373">
    <property type="taxonomic scope" value="Eukaryota"/>
</dbReference>
<dbReference type="HOGENOM" id="CLU_031763_2_1_1"/>
<dbReference type="InParanoid" id="Q6FRY3"/>
<dbReference type="OMA" id="PMMRQMF"/>
<dbReference type="Proteomes" id="UP000002428">
    <property type="component" value="Chromosome H"/>
</dbReference>
<dbReference type="GO" id="GO:0000324">
    <property type="term" value="C:fungal-type vacuole"/>
    <property type="evidence" value="ECO:0007669"/>
    <property type="project" value="EnsemblFungi"/>
</dbReference>
<dbReference type="GO" id="GO:0005784">
    <property type="term" value="C:Sec61 translocon complex"/>
    <property type="evidence" value="ECO:0007669"/>
    <property type="project" value="EnsemblFungi"/>
</dbReference>
<dbReference type="GO" id="GO:1904680">
    <property type="term" value="F:peptide transmembrane transporter activity"/>
    <property type="evidence" value="ECO:0007669"/>
    <property type="project" value="EnsemblFungi"/>
</dbReference>
<dbReference type="GO" id="GO:0015450">
    <property type="term" value="F:protein-transporting ATPase activity"/>
    <property type="evidence" value="ECO:0007669"/>
    <property type="project" value="EnsemblFungi"/>
</dbReference>
<dbReference type="GO" id="GO:0005048">
    <property type="term" value="F:signal sequence binding"/>
    <property type="evidence" value="ECO:0007669"/>
    <property type="project" value="EnsemblFungi"/>
</dbReference>
<dbReference type="GO" id="GO:0070843">
    <property type="term" value="P:misfolded protein transport"/>
    <property type="evidence" value="ECO:0007669"/>
    <property type="project" value="EnsemblFungi"/>
</dbReference>
<dbReference type="GO" id="GO:0031204">
    <property type="term" value="P:post-translational protein targeting to membrane, translocation"/>
    <property type="evidence" value="ECO:0007669"/>
    <property type="project" value="EnsemblFungi"/>
</dbReference>
<dbReference type="GO" id="GO:0030970">
    <property type="term" value="P:retrograde protein transport, ER to cytosol"/>
    <property type="evidence" value="ECO:0007669"/>
    <property type="project" value="EnsemblFungi"/>
</dbReference>
<dbReference type="GO" id="GO:0006616">
    <property type="term" value="P:SRP-dependent cotranslational protein targeting to membrane, translocation"/>
    <property type="evidence" value="ECO:0007669"/>
    <property type="project" value="EnsemblFungi"/>
</dbReference>
<dbReference type="FunFam" id="1.10.3370.10:FF:000002">
    <property type="entry name" value="Transport Sec61 subunit alpha isoform 2"/>
    <property type="match status" value="1"/>
</dbReference>
<dbReference type="Gene3D" id="1.10.3370.10">
    <property type="entry name" value="SecY subunit domain"/>
    <property type="match status" value="1"/>
</dbReference>
<dbReference type="InterPro" id="IPR002208">
    <property type="entry name" value="SecY/SEC61-alpha"/>
</dbReference>
<dbReference type="InterPro" id="IPR030659">
    <property type="entry name" value="SecY_CS"/>
</dbReference>
<dbReference type="InterPro" id="IPR023201">
    <property type="entry name" value="SecY_dom_sf"/>
</dbReference>
<dbReference type="InterPro" id="IPR019561">
    <property type="entry name" value="Translocon_Sec61/SecY_plug_dom"/>
</dbReference>
<dbReference type="NCBIfam" id="TIGR00967">
    <property type="entry name" value="3a0501s007"/>
    <property type="match status" value="1"/>
</dbReference>
<dbReference type="NCBIfam" id="NF006341">
    <property type="entry name" value="PRK08568.1-5"/>
    <property type="match status" value="1"/>
</dbReference>
<dbReference type="PANTHER" id="PTHR10906">
    <property type="entry name" value="SECY/SEC61-ALPHA FAMILY MEMBER"/>
    <property type="match status" value="1"/>
</dbReference>
<dbReference type="Pfam" id="PF10559">
    <property type="entry name" value="Plug_translocon"/>
    <property type="match status" value="1"/>
</dbReference>
<dbReference type="Pfam" id="PF00344">
    <property type="entry name" value="SecY"/>
    <property type="match status" value="1"/>
</dbReference>
<dbReference type="PIRSF" id="PIRSF004557">
    <property type="entry name" value="SecY"/>
    <property type="match status" value="1"/>
</dbReference>
<dbReference type="SUPFAM" id="SSF103491">
    <property type="entry name" value="Preprotein translocase SecY subunit"/>
    <property type="match status" value="1"/>
</dbReference>
<dbReference type="PROSITE" id="PS00755">
    <property type="entry name" value="SECY_1"/>
    <property type="match status" value="1"/>
</dbReference>
<dbReference type="PROSITE" id="PS00756">
    <property type="entry name" value="SECY_2"/>
    <property type="match status" value="1"/>
</dbReference>
<accession>Q6FRY3</accession>
<sequence length="479" mass="52640">MSDRILSLFKPFEAFLPEVISPERKVPYNQKLIWTGVSLLIFLVLGQIPLYGIVSAETSDPLYWLRAMLASNRGTLMELGVSPIITSSMIFQFLQGTQLLQVSLDSKEDRELYQIAQKVCAIILTFGQALVVVMTGNYGSPSDLGIAISLLLIFQLMFASFIVLLLDELLTKGYGLGSGISLFTATNIAENIFWKAFAPTTVNSGRGKEFEGAVIAFFHLLAVRKDKKRALVEAFYRENLPNMFQVIATVFVFLFVLYLQGFRYELPVKSTKVRGQMAIYPIKLFYTSNTPIMLQSALSSNIFLISQILFQKYPSNPVIRLFGVWGIRPGTNGPQVPLSGISYYLQPIGSLKMALLDPIKTVIYTAFVLGTCALFSKTWIEISGTSAKDVAKQFKEQGMVINGKRETSVYKELKKIIPTAAAFGGATIGALSVGSDLLGALGSGASILLATTTIYGYYEVAAKEGGFTKNLVNGFSEMM</sequence>
<organism>
    <name type="scientific">Candida glabrata (strain ATCC 2001 / BCRC 20586 / JCM 3761 / NBRC 0622 / NRRL Y-65 / CBS 138)</name>
    <name type="common">Yeast</name>
    <name type="synonym">Nakaseomyces glabratus</name>
    <dbReference type="NCBI Taxonomy" id="284593"/>
    <lineage>
        <taxon>Eukaryota</taxon>
        <taxon>Fungi</taxon>
        <taxon>Dikarya</taxon>
        <taxon>Ascomycota</taxon>
        <taxon>Saccharomycotina</taxon>
        <taxon>Saccharomycetes</taxon>
        <taxon>Saccharomycetales</taxon>
        <taxon>Saccharomycetaceae</taxon>
        <taxon>Nakaseomyces</taxon>
    </lineage>
</organism>
<proteinExistence type="inferred from homology"/>
<comment type="function">
    <text evidence="1">Appears to play a crucial role in the insertion of secretory and membrane polypeptides into the ER. It is required for assembly of membrane and secretory proteins and is essential for cell growth. It interacts with other membrane proteins required for protein translocation. Upon binding to SEC62/63 complex, secretory precursor polypeptides may engage SEC61 to begin membrane penetration event. A cycle of assembly and disassembly of SEC62/63 from SEC61 may govern the activity of the translocase (By similarity).</text>
</comment>
<comment type="subunit">
    <text evidence="1">Heterotrimeric complex composed of SEC61-alpha, SEC61-beta and SEC61-gamma.</text>
</comment>
<comment type="subcellular location">
    <subcellularLocation>
        <location>Endoplasmic reticulum membrane</location>
        <topology>Multi-pass membrane protein</topology>
    </subcellularLocation>
</comment>
<comment type="similarity">
    <text evidence="3">Belongs to the SecY/SEC61-alpha family.</text>
</comment>
<reference key="1">
    <citation type="journal article" date="2004" name="Nature">
        <title>Genome evolution in yeasts.</title>
        <authorList>
            <person name="Dujon B."/>
            <person name="Sherman D."/>
            <person name="Fischer G."/>
            <person name="Durrens P."/>
            <person name="Casaregola S."/>
            <person name="Lafontaine I."/>
            <person name="de Montigny J."/>
            <person name="Marck C."/>
            <person name="Neuveglise C."/>
            <person name="Talla E."/>
            <person name="Goffard N."/>
            <person name="Frangeul L."/>
            <person name="Aigle M."/>
            <person name="Anthouard V."/>
            <person name="Babour A."/>
            <person name="Barbe V."/>
            <person name="Barnay S."/>
            <person name="Blanchin S."/>
            <person name="Beckerich J.-M."/>
            <person name="Beyne E."/>
            <person name="Bleykasten C."/>
            <person name="Boisrame A."/>
            <person name="Boyer J."/>
            <person name="Cattolico L."/>
            <person name="Confanioleri F."/>
            <person name="de Daruvar A."/>
            <person name="Despons L."/>
            <person name="Fabre E."/>
            <person name="Fairhead C."/>
            <person name="Ferry-Dumazet H."/>
            <person name="Groppi A."/>
            <person name="Hantraye F."/>
            <person name="Hennequin C."/>
            <person name="Jauniaux N."/>
            <person name="Joyet P."/>
            <person name="Kachouri R."/>
            <person name="Kerrest A."/>
            <person name="Koszul R."/>
            <person name="Lemaire M."/>
            <person name="Lesur I."/>
            <person name="Ma L."/>
            <person name="Muller H."/>
            <person name="Nicaud J.-M."/>
            <person name="Nikolski M."/>
            <person name="Oztas S."/>
            <person name="Ozier-Kalogeropoulos O."/>
            <person name="Pellenz S."/>
            <person name="Potier S."/>
            <person name="Richard G.-F."/>
            <person name="Straub M.-L."/>
            <person name="Suleau A."/>
            <person name="Swennen D."/>
            <person name="Tekaia F."/>
            <person name="Wesolowski-Louvel M."/>
            <person name="Westhof E."/>
            <person name="Wirth B."/>
            <person name="Zeniou-Meyer M."/>
            <person name="Zivanovic Y."/>
            <person name="Bolotin-Fukuhara M."/>
            <person name="Thierry A."/>
            <person name="Bouchier C."/>
            <person name="Caudron B."/>
            <person name="Scarpelli C."/>
            <person name="Gaillardin C."/>
            <person name="Weissenbach J."/>
            <person name="Wincker P."/>
            <person name="Souciet J.-L."/>
        </authorList>
    </citation>
    <scope>NUCLEOTIDE SEQUENCE [LARGE SCALE GENOMIC DNA]</scope>
    <source>
        <strain>ATCC 2001 / BCRC 20586 / JCM 3761 / NBRC 0622 / NRRL Y-65 / CBS 138</strain>
    </source>
</reference>
<keyword id="KW-0256">Endoplasmic reticulum</keyword>
<keyword id="KW-0472">Membrane</keyword>
<keyword id="KW-0653">Protein transport</keyword>
<keyword id="KW-1185">Reference proteome</keyword>
<keyword id="KW-0811">Translocation</keyword>
<keyword id="KW-0812">Transmembrane</keyword>
<keyword id="KW-1133">Transmembrane helix</keyword>
<keyword id="KW-0813">Transport</keyword>
<evidence type="ECO:0000250" key="1"/>
<evidence type="ECO:0000255" key="2"/>
<evidence type="ECO:0000305" key="3"/>
<protein>
    <recommendedName>
        <fullName>Protein transport protein SEC61 subunit alpha</fullName>
    </recommendedName>
</protein>
<feature type="chain" id="PRO_0000131782" description="Protein transport protein SEC61 subunit alpha">
    <location>
        <begin position="1"/>
        <end position="479"/>
    </location>
</feature>
<feature type="topological domain" description="Cytoplasmic" evidence="2">
    <location>
        <begin position="1"/>
        <end position="32"/>
    </location>
</feature>
<feature type="transmembrane region" description="Helical" evidence="2">
    <location>
        <begin position="33"/>
        <end position="53"/>
    </location>
</feature>
<feature type="topological domain" description="Lumenal" evidence="2">
    <location>
        <begin position="54"/>
        <end position="75"/>
    </location>
</feature>
<feature type="transmembrane region" description="Helical" evidence="2">
    <location>
        <begin position="76"/>
        <end position="96"/>
    </location>
</feature>
<feature type="topological domain" description="Cytoplasmic" evidence="2">
    <location>
        <begin position="97"/>
        <end position="118"/>
    </location>
</feature>
<feature type="transmembrane region" description="Helical" evidence="2">
    <location>
        <begin position="119"/>
        <end position="139"/>
    </location>
</feature>
<feature type="topological domain" description="Lumenal" evidence="2">
    <location>
        <begin position="140"/>
        <end position="145"/>
    </location>
</feature>
<feature type="transmembrane region" description="Helical" evidence="2">
    <location>
        <begin position="146"/>
        <end position="166"/>
    </location>
</feature>
<feature type="topological domain" description="Cytoplasmic" evidence="2">
    <location>
        <begin position="167"/>
        <end position="245"/>
    </location>
</feature>
<feature type="transmembrane region" description="Helical" evidence="2">
    <location>
        <begin position="246"/>
        <end position="266"/>
    </location>
</feature>
<feature type="topological domain" description="Lumenal" evidence="2">
    <location>
        <begin position="267"/>
        <end position="361"/>
    </location>
</feature>
<feature type="transmembrane region" description="Helical" evidence="2">
    <location>
        <begin position="362"/>
        <end position="382"/>
    </location>
</feature>
<feature type="topological domain" description="Cytoplasmic" evidence="2">
    <location>
        <begin position="383"/>
        <end position="415"/>
    </location>
</feature>
<feature type="transmembrane region" description="Helical" evidence="2">
    <location>
        <begin position="416"/>
        <end position="434"/>
    </location>
</feature>
<feature type="topological domain" description="Lumenal" evidence="2">
    <location>
        <begin position="435"/>
        <end position="440"/>
    </location>
</feature>
<feature type="transmembrane region" description="Helical" evidence="2">
    <location>
        <begin position="441"/>
        <end position="458"/>
    </location>
</feature>
<feature type="topological domain" description="Cytoplasmic" evidence="2">
    <location>
        <begin position="459"/>
        <end position="479"/>
    </location>
</feature>